<gene>
    <name evidence="1" type="primary">rlmH</name>
    <name type="ordered locus">AB57_1110</name>
</gene>
<evidence type="ECO:0000255" key="1">
    <source>
        <dbReference type="HAMAP-Rule" id="MF_00658"/>
    </source>
</evidence>
<comment type="function">
    <text evidence="1">Specifically methylates the pseudouridine at position 1915 (m3Psi1915) in 23S rRNA.</text>
</comment>
<comment type="catalytic activity">
    <reaction evidence="1">
        <text>pseudouridine(1915) in 23S rRNA + S-adenosyl-L-methionine = N(3)-methylpseudouridine(1915) in 23S rRNA + S-adenosyl-L-homocysteine + H(+)</text>
        <dbReference type="Rhea" id="RHEA:42752"/>
        <dbReference type="Rhea" id="RHEA-COMP:10221"/>
        <dbReference type="Rhea" id="RHEA-COMP:10222"/>
        <dbReference type="ChEBI" id="CHEBI:15378"/>
        <dbReference type="ChEBI" id="CHEBI:57856"/>
        <dbReference type="ChEBI" id="CHEBI:59789"/>
        <dbReference type="ChEBI" id="CHEBI:65314"/>
        <dbReference type="ChEBI" id="CHEBI:74486"/>
        <dbReference type="EC" id="2.1.1.177"/>
    </reaction>
</comment>
<comment type="subunit">
    <text evidence="1">Homodimer.</text>
</comment>
<comment type="subcellular location">
    <subcellularLocation>
        <location evidence="1">Cytoplasm</location>
    </subcellularLocation>
</comment>
<comment type="similarity">
    <text evidence="1">Belongs to the RNA methyltransferase RlmH family.</text>
</comment>
<dbReference type="EC" id="2.1.1.177" evidence="1"/>
<dbReference type="EMBL" id="CP001182">
    <property type="protein sequence ID" value="ACJ40895.1"/>
    <property type="molecule type" value="Genomic_DNA"/>
</dbReference>
<dbReference type="RefSeq" id="WP_000702193.1">
    <property type="nucleotide sequence ID" value="NC_011586.2"/>
</dbReference>
<dbReference type="SMR" id="B7I8V1"/>
<dbReference type="GeneID" id="92892993"/>
<dbReference type="KEGG" id="abn:AB57_1110"/>
<dbReference type="HOGENOM" id="CLU_100552_1_0_6"/>
<dbReference type="Proteomes" id="UP000007094">
    <property type="component" value="Chromosome"/>
</dbReference>
<dbReference type="GO" id="GO:0005737">
    <property type="term" value="C:cytoplasm"/>
    <property type="evidence" value="ECO:0007669"/>
    <property type="project" value="UniProtKB-SubCell"/>
</dbReference>
<dbReference type="GO" id="GO:0070038">
    <property type="term" value="F:rRNA (pseudouridine-N3-)-methyltransferase activity"/>
    <property type="evidence" value="ECO:0007669"/>
    <property type="project" value="UniProtKB-UniRule"/>
</dbReference>
<dbReference type="CDD" id="cd18081">
    <property type="entry name" value="RlmH-like"/>
    <property type="match status" value="1"/>
</dbReference>
<dbReference type="Gene3D" id="3.40.1280.10">
    <property type="match status" value="1"/>
</dbReference>
<dbReference type="HAMAP" id="MF_00658">
    <property type="entry name" value="23SrRNA_methyltr_H"/>
    <property type="match status" value="1"/>
</dbReference>
<dbReference type="InterPro" id="IPR029028">
    <property type="entry name" value="Alpha/beta_knot_MTases"/>
</dbReference>
<dbReference type="InterPro" id="IPR003742">
    <property type="entry name" value="RlmH-like"/>
</dbReference>
<dbReference type="InterPro" id="IPR029026">
    <property type="entry name" value="tRNA_m1G_MTases_N"/>
</dbReference>
<dbReference type="NCBIfam" id="NF000986">
    <property type="entry name" value="PRK00103.1-4"/>
    <property type="match status" value="1"/>
</dbReference>
<dbReference type="NCBIfam" id="TIGR00246">
    <property type="entry name" value="tRNA_RlmH_YbeA"/>
    <property type="match status" value="1"/>
</dbReference>
<dbReference type="PANTHER" id="PTHR33603">
    <property type="entry name" value="METHYLTRANSFERASE"/>
    <property type="match status" value="1"/>
</dbReference>
<dbReference type="PANTHER" id="PTHR33603:SF1">
    <property type="entry name" value="RIBOSOMAL RNA LARGE SUBUNIT METHYLTRANSFERASE H"/>
    <property type="match status" value="1"/>
</dbReference>
<dbReference type="Pfam" id="PF02590">
    <property type="entry name" value="SPOUT_MTase"/>
    <property type="match status" value="1"/>
</dbReference>
<dbReference type="PIRSF" id="PIRSF004505">
    <property type="entry name" value="MT_bac"/>
    <property type="match status" value="1"/>
</dbReference>
<dbReference type="SUPFAM" id="SSF75217">
    <property type="entry name" value="alpha/beta knot"/>
    <property type="match status" value="1"/>
</dbReference>
<keyword id="KW-0963">Cytoplasm</keyword>
<keyword id="KW-0489">Methyltransferase</keyword>
<keyword id="KW-0698">rRNA processing</keyword>
<keyword id="KW-0949">S-adenosyl-L-methionine</keyword>
<keyword id="KW-0808">Transferase</keyword>
<organism>
    <name type="scientific">Acinetobacter baumannii (strain AB0057)</name>
    <dbReference type="NCBI Taxonomy" id="480119"/>
    <lineage>
        <taxon>Bacteria</taxon>
        <taxon>Pseudomonadati</taxon>
        <taxon>Pseudomonadota</taxon>
        <taxon>Gammaproteobacteria</taxon>
        <taxon>Moraxellales</taxon>
        <taxon>Moraxellaceae</taxon>
        <taxon>Acinetobacter</taxon>
        <taxon>Acinetobacter calcoaceticus/baumannii complex</taxon>
    </lineage>
</organism>
<name>RLMH_ACIB5</name>
<protein>
    <recommendedName>
        <fullName evidence="1">Ribosomal RNA large subunit methyltransferase H</fullName>
        <ecNumber evidence="1">2.1.1.177</ecNumber>
    </recommendedName>
    <alternativeName>
        <fullName evidence="1">23S rRNA (pseudouridine1915-N3)-methyltransferase</fullName>
    </alternativeName>
    <alternativeName>
        <fullName evidence="1">23S rRNA m3Psi1915 methyltransferase</fullName>
    </alternativeName>
    <alternativeName>
        <fullName evidence="1">rRNA (pseudouridine-N3-)-methyltransferase RlmH</fullName>
    </alternativeName>
</protein>
<feature type="chain" id="PRO_1000131223" description="Ribosomal RNA large subunit methyltransferase H">
    <location>
        <begin position="1"/>
        <end position="159"/>
    </location>
</feature>
<feature type="binding site" evidence="1">
    <location>
        <position position="76"/>
    </location>
    <ligand>
        <name>S-adenosyl-L-methionine</name>
        <dbReference type="ChEBI" id="CHEBI:59789"/>
    </ligand>
</feature>
<feature type="binding site" evidence="1">
    <location>
        <position position="107"/>
    </location>
    <ligand>
        <name>S-adenosyl-L-methionine</name>
        <dbReference type="ChEBI" id="CHEBI:59789"/>
    </ligand>
</feature>
<feature type="binding site" evidence="1">
    <location>
        <begin position="126"/>
        <end position="131"/>
    </location>
    <ligand>
        <name>S-adenosyl-L-methionine</name>
        <dbReference type="ChEBI" id="CHEBI:59789"/>
    </ligand>
</feature>
<reference key="1">
    <citation type="journal article" date="2008" name="J. Bacteriol.">
        <title>Comparative genome sequence analysis of multidrug-resistant Acinetobacter baumannii.</title>
        <authorList>
            <person name="Adams M.D."/>
            <person name="Goglin K."/>
            <person name="Molyneaux N."/>
            <person name="Hujer K.M."/>
            <person name="Lavender H."/>
            <person name="Jamison J.J."/>
            <person name="MacDonald I.J."/>
            <person name="Martin K.M."/>
            <person name="Russo T."/>
            <person name="Campagnari A.A."/>
            <person name="Hujer A.M."/>
            <person name="Bonomo R.A."/>
            <person name="Gill S.R."/>
        </authorList>
    </citation>
    <scope>NUCLEOTIDE SEQUENCE [LARGE SCALE GENOMIC DNA]</scope>
    <source>
        <strain>AB0057</strain>
    </source>
</reference>
<proteinExistence type="inferred from homology"/>
<accession>B7I8V1</accession>
<sequence length="159" mass="18063">MKIRILTIGQKMPAWVLTGFEDYFKRIQPFVQTQVIELPMAKRGKNDSEADILKYCQIEGESILNALKPNETLIALEVGGRELSTEKLADTMKQWMLEGNDVALAIGGPDGLSDQVRKAAAWHWSLSKLTMPHPLVRILLIEQLYRAMSINHNHPYHRA</sequence>